<dbReference type="EC" id="7.1.1.-" evidence="1"/>
<dbReference type="EMBL" id="CP001127">
    <property type="protein sequence ID" value="ACF90824.1"/>
    <property type="molecule type" value="Genomic_DNA"/>
</dbReference>
<dbReference type="RefSeq" id="WP_000156669.1">
    <property type="nucleotide sequence ID" value="NC_011094.1"/>
</dbReference>
<dbReference type="SMR" id="B4TPJ8"/>
<dbReference type="KEGG" id="sew:SeSA_A2544"/>
<dbReference type="HOGENOM" id="CLU_007100_1_5_6"/>
<dbReference type="Proteomes" id="UP000001865">
    <property type="component" value="Chromosome"/>
</dbReference>
<dbReference type="GO" id="GO:0005886">
    <property type="term" value="C:plasma membrane"/>
    <property type="evidence" value="ECO:0007669"/>
    <property type="project" value="UniProtKB-SubCell"/>
</dbReference>
<dbReference type="GO" id="GO:0008137">
    <property type="term" value="F:NADH dehydrogenase (ubiquinone) activity"/>
    <property type="evidence" value="ECO:0007669"/>
    <property type="project" value="InterPro"/>
</dbReference>
<dbReference type="GO" id="GO:0050136">
    <property type="term" value="F:NADH:ubiquinone reductase (non-electrogenic) activity"/>
    <property type="evidence" value="ECO:0007669"/>
    <property type="project" value="UniProtKB-UniRule"/>
</dbReference>
<dbReference type="GO" id="GO:0048038">
    <property type="term" value="F:quinone binding"/>
    <property type="evidence" value="ECO:0007669"/>
    <property type="project" value="UniProtKB-KW"/>
</dbReference>
<dbReference type="GO" id="GO:0042773">
    <property type="term" value="P:ATP synthesis coupled electron transport"/>
    <property type="evidence" value="ECO:0007669"/>
    <property type="project" value="InterPro"/>
</dbReference>
<dbReference type="HAMAP" id="MF_00445">
    <property type="entry name" value="NDH1_NuoN_1"/>
    <property type="match status" value="1"/>
</dbReference>
<dbReference type="InterPro" id="IPR010096">
    <property type="entry name" value="NADH-Q_OxRdtase_suN/2"/>
</dbReference>
<dbReference type="InterPro" id="IPR001750">
    <property type="entry name" value="ND/Mrp_TM"/>
</dbReference>
<dbReference type="NCBIfam" id="TIGR01770">
    <property type="entry name" value="NDH_I_N"/>
    <property type="match status" value="1"/>
</dbReference>
<dbReference type="NCBIfam" id="NF004439">
    <property type="entry name" value="PRK05777.1-1"/>
    <property type="match status" value="1"/>
</dbReference>
<dbReference type="PANTHER" id="PTHR22773">
    <property type="entry name" value="NADH DEHYDROGENASE"/>
    <property type="match status" value="1"/>
</dbReference>
<dbReference type="Pfam" id="PF00361">
    <property type="entry name" value="Proton_antipo_M"/>
    <property type="match status" value="1"/>
</dbReference>
<reference key="1">
    <citation type="journal article" date="2011" name="J. Bacteriol.">
        <title>Comparative genomics of 28 Salmonella enterica isolates: evidence for CRISPR-mediated adaptive sublineage evolution.</title>
        <authorList>
            <person name="Fricke W.F."/>
            <person name="Mammel M.K."/>
            <person name="McDermott P.F."/>
            <person name="Tartera C."/>
            <person name="White D.G."/>
            <person name="Leclerc J.E."/>
            <person name="Ravel J."/>
            <person name="Cebula T.A."/>
        </authorList>
    </citation>
    <scope>NUCLEOTIDE SEQUENCE [LARGE SCALE GENOMIC DNA]</scope>
    <source>
        <strain>CVM19633</strain>
    </source>
</reference>
<comment type="function">
    <text evidence="1">NDH-1 shuttles electrons from NADH, via FMN and iron-sulfur (Fe-S) centers, to quinones in the respiratory chain. The immediate electron acceptor for the enzyme in this species is believed to be ubiquinone. Couples the redox reaction to proton translocation (for every two electrons transferred, four hydrogen ions are translocated across the cytoplasmic membrane), and thus conserves the redox energy in a proton gradient.</text>
</comment>
<comment type="catalytic activity">
    <reaction evidence="1">
        <text>a quinone + NADH + 5 H(+)(in) = a quinol + NAD(+) + 4 H(+)(out)</text>
        <dbReference type="Rhea" id="RHEA:57888"/>
        <dbReference type="ChEBI" id="CHEBI:15378"/>
        <dbReference type="ChEBI" id="CHEBI:24646"/>
        <dbReference type="ChEBI" id="CHEBI:57540"/>
        <dbReference type="ChEBI" id="CHEBI:57945"/>
        <dbReference type="ChEBI" id="CHEBI:132124"/>
    </reaction>
</comment>
<comment type="subunit">
    <text evidence="1">NDH-1 is composed of 13 different subunits. Subunits NuoA, H, J, K, L, M, N constitute the membrane sector of the complex.</text>
</comment>
<comment type="subcellular location">
    <subcellularLocation>
        <location evidence="1">Cell inner membrane</location>
        <topology evidence="1">Multi-pass membrane protein</topology>
    </subcellularLocation>
</comment>
<comment type="similarity">
    <text evidence="1">Belongs to the complex I subunit 2 family.</text>
</comment>
<proteinExistence type="inferred from homology"/>
<sequence>MTITPQHLIALLPLLIVGLTVVVVMLSIAWRRNHFLNATLSVIGLNAALVSLWFVGQAGAMDVTPLMRVDGFAMLYTGLVLLASLATCTFAYPWLEGYNDNQEEFYLLVLIASLGGILLANANHLAALFLGIELISLPLFGLIGYAFRQKRSLEASIKYTILSAAASSFLLFGMALVYAQSGNLSFEALGKSLGDGMLHEPLLLAGFGLMIVGLGFKLSLVPFHLWTPDVYQGAPAPVSTFLATASKIAIFGVVMRLFLYAPVGDSEAVRVVLGIIAFASIIFGNLMALSQTNIKRLLGYSSISHLGYLLVALIALQSGEMSMEAVGVYLAGYLFSSLGAFGVVSLMSSPFRGPDADSLYSYRGLFWHRPVLAAVMTVMMLSLAGIPMTLGFIGKFYVLAVGVQASLWWLVAAVVVGSAIGLYYYLRVAVSLYLHAPQQPGRDAPTNWQYSAGGIVVLISALLVLVLGVWPQPLISLVQLATPLM</sequence>
<gene>
    <name evidence="1" type="primary">nuoN</name>
    <name type="ordered locus">SeSA_A2544</name>
</gene>
<accession>B4TPJ8</accession>
<feature type="chain" id="PRO_1000145879" description="NADH-quinone oxidoreductase subunit N">
    <location>
        <begin position="1"/>
        <end position="485"/>
    </location>
</feature>
<feature type="transmembrane region" description="Helical" evidence="1">
    <location>
        <begin position="8"/>
        <end position="28"/>
    </location>
</feature>
<feature type="transmembrane region" description="Helical" evidence="1">
    <location>
        <begin position="35"/>
        <end position="55"/>
    </location>
</feature>
<feature type="transmembrane region" description="Helical" evidence="1">
    <location>
        <begin position="71"/>
        <end position="91"/>
    </location>
</feature>
<feature type="transmembrane region" description="Helical" evidence="1">
    <location>
        <begin position="105"/>
        <end position="125"/>
    </location>
</feature>
<feature type="transmembrane region" description="Helical" evidence="1">
    <location>
        <begin position="127"/>
        <end position="147"/>
    </location>
</feature>
<feature type="transmembrane region" description="Helical" evidence="1">
    <location>
        <begin position="159"/>
        <end position="179"/>
    </location>
</feature>
<feature type="transmembrane region" description="Helical" evidence="1">
    <location>
        <begin position="203"/>
        <end position="223"/>
    </location>
</feature>
<feature type="transmembrane region" description="Helical" evidence="1">
    <location>
        <begin position="235"/>
        <end position="255"/>
    </location>
</feature>
<feature type="transmembrane region" description="Helical" evidence="1">
    <location>
        <begin position="271"/>
        <end position="291"/>
    </location>
</feature>
<feature type="transmembrane region" description="Helical" evidence="1">
    <location>
        <begin position="297"/>
        <end position="317"/>
    </location>
</feature>
<feature type="transmembrane region" description="Helical" evidence="1">
    <location>
        <begin position="326"/>
        <end position="346"/>
    </location>
</feature>
<feature type="transmembrane region" description="Helical" evidence="1">
    <location>
        <begin position="373"/>
        <end position="393"/>
    </location>
</feature>
<feature type="transmembrane region" description="Helical" evidence="1">
    <location>
        <begin position="408"/>
        <end position="430"/>
    </location>
</feature>
<feature type="transmembrane region" description="Helical" evidence="1">
    <location>
        <begin position="455"/>
        <end position="475"/>
    </location>
</feature>
<protein>
    <recommendedName>
        <fullName evidence="1">NADH-quinone oxidoreductase subunit N</fullName>
        <ecNumber evidence="1">7.1.1.-</ecNumber>
    </recommendedName>
    <alternativeName>
        <fullName evidence="1">NADH dehydrogenase I subunit N</fullName>
    </alternativeName>
    <alternativeName>
        <fullName evidence="1">NDH-1 subunit N</fullName>
    </alternativeName>
</protein>
<organism>
    <name type="scientific">Salmonella schwarzengrund (strain CVM19633)</name>
    <dbReference type="NCBI Taxonomy" id="439843"/>
    <lineage>
        <taxon>Bacteria</taxon>
        <taxon>Pseudomonadati</taxon>
        <taxon>Pseudomonadota</taxon>
        <taxon>Gammaproteobacteria</taxon>
        <taxon>Enterobacterales</taxon>
        <taxon>Enterobacteriaceae</taxon>
        <taxon>Salmonella</taxon>
    </lineage>
</organism>
<evidence type="ECO:0000255" key="1">
    <source>
        <dbReference type="HAMAP-Rule" id="MF_00445"/>
    </source>
</evidence>
<keyword id="KW-0997">Cell inner membrane</keyword>
<keyword id="KW-1003">Cell membrane</keyword>
<keyword id="KW-0472">Membrane</keyword>
<keyword id="KW-0520">NAD</keyword>
<keyword id="KW-0874">Quinone</keyword>
<keyword id="KW-1278">Translocase</keyword>
<keyword id="KW-0812">Transmembrane</keyword>
<keyword id="KW-1133">Transmembrane helix</keyword>
<keyword id="KW-0813">Transport</keyword>
<keyword id="KW-0830">Ubiquinone</keyword>
<name>NUON_SALSV</name>